<feature type="chain" id="PRO_1000142700" description="Large ribosomal subunit protein uL18">
    <location>
        <begin position="1"/>
        <end position="114"/>
    </location>
</feature>
<organism>
    <name type="scientific">Porphyromonas gingivalis (strain ATCC 33277 / DSM 20709 / CIP 103683 / JCM 12257 / NCTC 11834 / 2561)</name>
    <dbReference type="NCBI Taxonomy" id="431947"/>
    <lineage>
        <taxon>Bacteria</taxon>
        <taxon>Pseudomonadati</taxon>
        <taxon>Bacteroidota</taxon>
        <taxon>Bacteroidia</taxon>
        <taxon>Bacteroidales</taxon>
        <taxon>Porphyromonadaceae</taxon>
        <taxon>Porphyromonas</taxon>
    </lineage>
</organism>
<evidence type="ECO:0000255" key="1">
    <source>
        <dbReference type="HAMAP-Rule" id="MF_01337"/>
    </source>
</evidence>
<evidence type="ECO:0000305" key="2"/>
<sequence>MVTKEQRRQKIKARVRGKISGTQERPRLTVFRSNKQIYAQLIDDIAGRTLASASSLKLEMTGSKKEIAAKVGDEIAKAATEAGISTVVFDRNGYLFHGRIKELADAARKGGLKF</sequence>
<reference key="1">
    <citation type="journal article" date="2008" name="DNA Res.">
        <title>Determination of the genome sequence of Porphyromonas gingivalis strain ATCC 33277 and genomic comparison with strain W83 revealed extensive genome rearrangements in P. gingivalis.</title>
        <authorList>
            <person name="Naito M."/>
            <person name="Hirakawa H."/>
            <person name="Yamashita A."/>
            <person name="Ohara N."/>
            <person name="Shoji M."/>
            <person name="Yukitake H."/>
            <person name="Nakayama K."/>
            <person name="Toh H."/>
            <person name="Yoshimura F."/>
            <person name="Kuhara S."/>
            <person name="Hattori M."/>
            <person name="Hayashi T."/>
            <person name="Nakayama K."/>
        </authorList>
    </citation>
    <scope>NUCLEOTIDE SEQUENCE [LARGE SCALE GENOMIC DNA]</scope>
    <source>
        <strain>ATCC 33277 / DSM 20709 / CIP 103683 / JCM 12257 / NCTC 11834 / 2561</strain>
    </source>
</reference>
<proteinExistence type="inferred from homology"/>
<dbReference type="EMBL" id="AP009380">
    <property type="protein sequence ID" value="BAG34371.1"/>
    <property type="molecule type" value="Genomic_DNA"/>
</dbReference>
<dbReference type="RefSeq" id="WP_012458577.1">
    <property type="nucleotide sequence ID" value="NZ_CP025930.1"/>
</dbReference>
<dbReference type="SMR" id="B2RLX6"/>
<dbReference type="GeneID" id="29257003"/>
<dbReference type="KEGG" id="pgn:PGN_1852"/>
<dbReference type="eggNOG" id="COG0256">
    <property type="taxonomic scope" value="Bacteria"/>
</dbReference>
<dbReference type="HOGENOM" id="CLU_098841_0_1_10"/>
<dbReference type="OrthoDB" id="9810939at2"/>
<dbReference type="BioCyc" id="PGIN431947:G1G2V-2066-MONOMER"/>
<dbReference type="Proteomes" id="UP000008842">
    <property type="component" value="Chromosome"/>
</dbReference>
<dbReference type="GO" id="GO:0022625">
    <property type="term" value="C:cytosolic large ribosomal subunit"/>
    <property type="evidence" value="ECO:0007669"/>
    <property type="project" value="TreeGrafter"/>
</dbReference>
<dbReference type="GO" id="GO:0008097">
    <property type="term" value="F:5S rRNA binding"/>
    <property type="evidence" value="ECO:0007669"/>
    <property type="project" value="TreeGrafter"/>
</dbReference>
<dbReference type="GO" id="GO:0003735">
    <property type="term" value="F:structural constituent of ribosome"/>
    <property type="evidence" value="ECO:0007669"/>
    <property type="project" value="InterPro"/>
</dbReference>
<dbReference type="GO" id="GO:0006412">
    <property type="term" value="P:translation"/>
    <property type="evidence" value="ECO:0007669"/>
    <property type="project" value="UniProtKB-UniRule"/>
</dbReference>
<dbReference type="CDD" id="cd00432">
    <property type="entry name" value="Ribosomal_L18_L5e"/>
    <property type="match status" value="1"/>
</dbReference>
<dbReference type="FunFam" id="3.30.420.100:FF:000003">
    <property type="entry name" value="50S ribosomal protein L18"/>
    <property type="match status" value="1"/>
</dbReference>
<dbReference type="Gene3D" id="3.30.420.100">
    <property type="match status" value="1"/>
</dbReference>
<dbReference type="HAMAP" id="MF_01337_B">
    <property type="entry name" value="Ribosomal_uL18_B"/>
    <property type="match status" value="1"/>
</dbReference>
<dbReference type="InterPro" id="IPR004389">
    <property type="entry name" value="Ribosomal_uL18_bac-type"/>
</dbReference>
<dbReference type="InterPro" id="IPR005484">
    <property type="entry name" value="Ribosomal_uL18_bac/euk"/>
</dbReference>
<dbReference type="NCBIfam" id="TIGR00060">
    <property type="entry name" value="L18_bact"/>
    <property type="match status" value="1"/>
</dbReference>
<dbReference type="PANTHER" id="PTHR12899">
    <property type="entry name" value="39S RIBOSOMAL PROTEIN L18, MITOCHONDRIAL"/>
    <property type="match status" value="1"/>
</dbReference>
<dbReference type="PANTHER" id="PTHR12899:SF3">
    <property type="entry name" value="LARGE RIBOSOMAL SUBUNIT PROTEIN UL18M"/>
    <property type="match status" value="1"/>
</dbReference>
<dbReference type="Pfam" id="PF00861">
    <property type="entry name" value="Ribosomal_L18p"/>
    <property type="match status" value="1"/>
</dbReference>
<dbReference type="SUPFAM" id="SSF53137">
    <property type="entry name" value="Translational machinery components"/>
    <property type="match status" value="1"/>
</dbReference>
<protein>
    <recommendedName>
        <fullName evidence="1">Large ribosomal subunit protein uL18</fullName>
    </recommendedName>
    <alternativeName>
        <fullName evidence="2">50S ribosomal protein L18</fullName>
    </alternativeName>
</protein>
<name>RL18_PORG3</name>
<gene>
    <name evidence="1" type="primary">rplR</name>
    <name type="ordered locus">PGN_1852</name>
</gene>
<accession>B2RLX6</accession>
<comment type="function">
    <text evidence="1">This is one of the proteins that bind and probably mediate the attachment of the 5S RNA into the large ribosomal subunit, where it forms part of the central protuberance.</text>
</comment>
<comment type="subunit">
    <text evidence="1">Part of the 50S ribosomal subunit; part of the 5S rRNA/L5/L18/L25 subcomplex. Contacts the 5S and 23S rRNAs.</text>
</comment>
<comment type="similarity">
    <text evidence="1">Belongs to the universal ribosomal protein uL18 family.</text>
</comment>
<keyword id="KW-0687">Ribonucleoprotein</keyword>
<keyword id="KW-0689">Ribosomal protein</keyword>
<keyword id="KW-0694">RNA-binding</keyword>
<keyword id="KW-0699">rRNA-binding</keyword>